<evidence type="ECO:0000250" key="1"/>
<evidence type="ECO:0000250" key="2">
    <source>
        <dbReference type="UniProtKB" id="P09040"/>
    </source>
</evidence>
<evidence type="ECO:0000255" key="3"/>
<evidence type="ECO:0000303" key="4">
    <source>
    </source>
</evidence>
<evidence type="ECO:0000305" key="5"/>
<name>DSK_DROPS</name>
<protein>
    <recommendedName>
        <fullName evidence="4">Drosulfakinins</fullName>
    </recommendedName>
    <component>
        <recommendedName>
            <fullName evidence="4">Drosulfakinin-0</fullName>
            <shortName evidence="4">DSK-0</shortName>
        </recommendedName>
    </component>
    <component>
        <recommendedName>
            <fullName evidence="4">Drosulfakinin-1</fullName>
        </recommendedName>
        <alternativeName>
            <fullName evidence="4">Drosulfakinin I</fullName>
            <shortName evidence="4">DSK-I</shortName>
        </alternativeName>
    </component>
    <component>
        <recommendedName>
            <fullName evidence="4">Drosulfakinin-2</fullName>
        </recommendedName>
        <alternativeName>
            <fullName evidence="4">Drosulfakinin II</fullName>
            <shortName evidence="4">DSK-II</shortName>
        </alternativeName>
    </component>
</protein>
<dbReference type="EMBL" id="CM000070">
    <property type="protein sequence ID" value="EAL28786.2"/>
    <property type="molecule type" value="Genomic_DNA"/>
</dbReference>
<dbReference type="RefSeq" id="XP_001359636.2">
    <property type="nucleotide sequence ID" value="XM_001359599.3"/>
</dbReference>
<dbReference type="SMR" id="Q295C6"/>
<dbReference type="FunCoup" id="Q295C6">
    <property type="interactions" value="103"/>
</dbReference>
<dbReference type="STRING" id="46245.Q295C6"/>
<dbReference type="EnsemblMetazoa" id="FBtr0282883">
    <property type="protein sequence ID" value="FBpp0281321"/>
    <property type="gene ID" value="FBgn0074814"/>
</dbReference>
<dbReference type="GeneID" id="4802776"/>
<dbReference type="KEGG" id="dpo:4802776"/>
<dbReference type="CTD" id="45845"/>
<dbReference type="eggNOG" id="ENOG502SESC">
    <property type="taxonomic scope" value="Eukaryota"/>
</dbReference>
<dbReference type="HOGENOM" id="CLU_1847224_0_0_1"/>
<dbReference type="InParanoid" id="Q295C6"/>
<dbReference type="OMA" id="FGDRRNQ"/>
<dbReference type="Proteomes" id="UP000001819">
    <property type="component" value="Chromosome 2"/>
</dbReference>
<dbReference type="Bgee" id="FBgn0074814">
    <property type="expression patterns" value="Expressed in insect adult head"/>
</dbReference>
<dbReference type="GO" id="GO:0005576">
    <property type="term" value="C:extracellular region"/>
    <property type="evidence" value="ECO:0007669"/>
    <property type="project" value="UniProtKB-SubCell"/>
</dbReference>
<dbReference type="GO" id="GO:0005179">
    <property type="term" value="F:hormone activity"/>
    <property type="evidence" value="ECO:0007669"/>
    <property type="project" value="UniProtKB-KW"/>
</dbReference>
<dbReference type="GO" id="GO:0007218">
    <property type="term" value="P:neuropeptide signaling pathway"/>
    <property type="evidence" value="ECO:0007669"/>
    <property type="project" value="UniProtKB-KW"/>
</dbReference>
<dbReference type="GO" id="GO:0006939">
    <property type="term" value="P:smooth muscle contraction"/>
    <property type="evidence" value="ECO:0000250"/>
    <property type="project" value="UniProtKB"/>
</dbReference>
<dbReference type="InterPro" id="IPR013152">
    <property type="entry name" value="Gastrin/cholecystokinin_CS"/>
</dbReference>
<dbReference type="InterPro" id="IPR013259">
    <property type="entry name" value="Sulfakinin"/>
</dbReference>
<dbReference type="Pfam" id="PF08257">
    <property type="entry name" value="Sulfakinin"/>
    <property type="match status" value="2"/>
</dbReference>
<dbReference type="PROSITE" id="PS00259">
    <property type="entry name" value="GASTRIN"/>
    <property type="match status" value="2"/>
</dbReference>
<feature type="signal peptide" evidence="3">
    <location>
        <begin position="1"/>
        <end position="35"/>
    </location>
</feature>
<feature type="propeptide" id="PRO_0000351170" evidence="3">
    <location>
        <begin position="36"/>
        <end position="71"/>
    </location>
</feature>
<feature type="peptide" id="PRO_0000351171" description="Drosulfakinin-0" evidence="3">
    <location>
        <begin position="74"/>
        <end position="80"/>
    </location>
</feature>
<feature type="propeptide" id="PRO_0000351172" evidence="3">
    <location>
        <begin position="81"/>
        <end position="109"/>
    </location>
</feature>
<feature type="peptide" id="PRO_0000351173" description="Drosulfakinin-1" evidence="3">
    <location>
        <begin position="112"/>
        <end position="120"/>
    </location>
</feature>
<feature type="peptide" id="PRO_0000351174" description="Drosulfakinin-2" evidence="1">
    <location>
        <begin position="124"/>
        <end position="137"/>
    </location>
</feature>
<feature type="modified residue" description="Phenylalanine amide" evidence="3">
    <location>
        <position position="80"/>
    </location>
</feature>
<feature type="modified residue" description="Sulfotyrosine" evidence="3">
    <location>
        <position position="115"/>
    </location>
</feature>
<feature type="modified residue" description="Phenylalanine amide" evidence="3">
    <location>
        <position position="120"/>
    </location>
</feature>
<feature type="modified residue" description="Sulfotyrosine" evidence="1">
    <location>
        <position position="132"/>
    </location>
</feature>
<feature type="modified residue" description="Phenylalanine amide" evidence="1">
    <location>
        <position position="137"/>
    </location>
</feature>
<gene>
    <name evidence="2" type="primary">Dsk</name>
    <name type="ORF">GA14787</name>
</gene>
<proteinExistence type="inferred from homology"/>
<organism>
    <name type="scientific">Drosophila pseudoobscura pseudoobscura</name>
    <name type="common">Fruit fly</name>
    <dbReference type="NCBI Taxonomy" id="46245"/>
    <lineage>
        <taxon>Eukaryota</taxon>
        <taxon>Metazoa</taxon>
        <taxon>Ecdysozoa</taxon>
        <taxon>Arthropoda</taxon>
        <taxon>Hexapoda</taxon>
        <taxon>Insecta</taxon>
        <taxon>Pterygota</taxon>
        <taxon>Neoptera</taxon>
        <taxon>Endopterygota</taxon>
        <taxon>Diptera</taxon>
        <taxon>Brachycera</taxon>
        <taxon>Muscomorpha</taxon>
        <taxon>Ephydroidea</taxon>
        <taxon>Drosophilidae</taxon>
        <taxon>Drosophila</taxon>
        <taxon>Sophophora</taxon>
    </lineage>
</organism>
<comment type="function">
    <text evidence="2">Drosulfakinin-0 (DSK 0) plays diverse biological roles including regulating gut muscle contraction in adults but not in larvae.</text>
</comment>
<comment type="subcellular location">
    <subcellularLocation>
        <location evidence="2">Secreted</location>
    </subcellularLocation>
</comment>
<comment type="similarity">
    <text evidence="3">Belongs to the gastrin/cholecystokinin family.</text>
</comment>
<reference key="1">
    <citation type="journal article" date="2005" name="Genome Res.">
        <title>Comparative genome sequencing of Drosophila pseudoobscura: chromosomal, gene, and cis-element evolution.</title>
        <authorList>
            <person name="Richards S."/>
            <person name="Liu Y."/>
            <person name="Bettencourt B.R."/>
            <person name="Hradecky P."/>
            <person name="Letovsky S."/>
            <person name="Nielsen R."/>
            <person name="Thornton K."/>
            <person name="Hubisz M.J."/>
            <person name="Chen R."/>
            <person name="Meisel R.P."/>
            <person name="Couronne O."/>
            <person name="Hua S."/>
            <person name="Smith M.A."/>
            <person name="Zhang P."/>
            <person name="Liu J."/>
            <person name="Bussemaker H.J."/>
            <person name="van Batenburg M.F."/>
            <person name="Howells S.L."/>
            <person name="Scherer S.E."/>
            <person name="Sodergren E."/>
            <person name="Matthews B.B."/>
            <person name="Crosby M.A."/>
            <person name="Schroeder A.J."/>
            <person name="Ortiz-Barrientos D."/>
            <person name="Rives C.M."/>
            <person name="Metzker M.L."/>
            <person name="Muzny D.M."/>
            <person name="Scott G."/>
            <person name="Steffen D."/>
            <person name="Wheeler D.A."/>
            <person name="Worley K.C."/>
            <person name="Havlak P."/>
            <person name="Durbin K.J."/>
            <person name="Egan A."/>
            <person name="Gill R."/>
            <person name="Hume J."/>
            <person name="Morgan M.B."/>
            <person name="Miner G."/>
            <person name="Hamilton C."/>
            <person name="Huang Y."/>
            <person name="Waldron L."/>
            <person name="Verduzco D."/>
            <person name="Clerc-Blankenburg K.P."/>
            <person name="Dubchak I."/>
            <person name="Noor M.A.F."/>
            <person name="Anderson W."/>
            <person name="White K.P."/>
            <person name="Clark A.G."/>
            <person name="Schaeffer S.W."/>
            <person name="Gelbart W.M."/>
            <person name="Weinstock G.M."/>
            <person name="Gibbs R.A."/>
        </authorList>
    </citation>
    <scope>NUCLEOTIDE SEQUENCE [LARGE SCALE GENOMIC DNA]</scope>
    <source>
        <strain>MV2-25 / Tucson 14011-0121.94</strain>
    </source>
</reference>
<reference evidence="5" key="2">
    <citation type="journal article" date="2007" name="J. Insect Physiol.">
        <title>The drosulfakinin 0 (DSK 0) peptide encoded in the conserved Dsk gene affects adult Drosophila melanogaster crop contractions.</title>
        <authorList>
            <person name="Palmer G.C."/>
            <person name="Tran T."/>
            <person name="Duttlinger A."/>
            <person name="Nichols R."/>
        </authorList>
    </citation>
    <scope>IDENTIFICATION</scope>
</reference>
<sequence>MGHRGMGCAHFATMAMPLWALTFYLLVVLPVPSQTASVEVGKEERRLQDLDPKMGSEAGNTDGLSLARFGSRRHQRSTGFGHRVPIISRPVIPIELDLLMDNEDDRTMSKRFDDYGHMRFGKRGGDDQFDDYGHMRFGR</sequence>
<accession>Q295C6</accession>
<keyword id="KW-0027">Amidation</keyword>
<keyword id="KW-0165">Cleavage on pair of basic residues</keyword>
<keyword id="KW-0372">Hormone</keyword>
<keyword id="KW-0527">Neuropeptide</keyword>
<keyword id="KW-1185">Reference proteome</keyword>
<keyword id="KW-0964">Secreted</keyword>
<keyword id="KW-0732">Signal</keyword>
<keyword id="KW-0765">Sulfation</keyword>